<protein>
    <recommendedName>
        <fullName>Prenylcysteine oxidase 1</fullName>
        <ecNumber evidence="2">1.8.3.5</ecNumber>
    </recommendedName>
</protein>
<comment type="function">
    <text evidence="1 2">Prenylcysteine oxidase that cleaves the thioether bond of prenyl-L-cysteines, such as farnesylcysteine and geranylgeranylcysteine (By similarity). Only active against free prenylcysteines and not prenylcysteine residues within prenylated proteins or peptides (By similarity). Involved in the final step in the degradation of prenylated proteins, by degrading prenylcysteines after the protein has been degraded (By similarity).</text>
</comment>
<comment type="catalytic activity">
    <reaction evidence="2">
        <text>an S-polyprenyl-L-cysteine + O2 + H2O = a polyprenal + L-cysteine + H2O2</text>
        <dbReference type="Rhea" id="RHEA:53892"/>
        <dbReference type="Rhea" id="RHEA-COMP:13675"/>
        <dbReference type="Rhea" id="RHEA-COMP:13676"/>
        <dbReference type="ChEBI" id="CHEBI:15377"/>
        <dbReference type="ChEBI" id="CHEBI:15379"/>
        <dbReference type="ChEBI" id="CHEBI:16240"/>
        <dbReference type="ChEBI" id="CHEBI:35235"/>
        <dbReference type="ChEBI" id="CHEBI:137934"/>
        <dbReference type="ChEBI" id="CHEBI:137935"/>
        <dbReference type="EC" id="1.8.3.5"/>
    </reaction>
    <physiologicalReaction direction="left-to-right" evidence="2">
        <dbReference type="Rhea" id="RHEA:53893"/>
    </physiologicalReaction>
</comment>
<comment type="catalytic activity">
    <reaction evidence="2">
        <text>S-(2E,6E)-farnesyl-L-cysteine + O2 + H2O = (2E,6E)-farnesal + L-cysteine + H2O2</text>
        <dbReference type="Rhea" id="RHEA:30231"/>
        <dbReference type="ChEBI" id="CHEBI:15377"/>
        <dbReference type="ChEBI" id="CHEBI:15379"/>
        <dbReference type="ChEBI" id="CHEBI:15894"/>
        <dbReference type="ChEBI" id="CHEBI:16240"/>
        <dbReference type="ChEBI" id="CHEBI:35235"/>
        <dbReference type="ChEBI" id="CHEBI:62141"/>
        <dbReference type="EC" id="1.8.3.5"/>
    </reaction>
    <physiologicalReaction direction="left-to-right" evidence="2">
        <dbReference type="Rhea" id="RHEA:30232"/>
    </physiologicalReaction>
</comment>
<comment type="catalytic activity">
    <reaction evidence="2">
        <text>[(2E,6E,10E)-geranylgeranyl]-L-cysteine + O2 + H2O = (2E,6E,10E)-geranylgeranial + L-cysteine + H2O2</text>
        <dbReference type="Rhea" id="RHEA:70407"/>
        <dbReference type="ChEBI" id="CHEBI:15377"/>
        <dbReference type="ChEBI" id="CHEBI:15379"/>
        <dbReference type="ChEBI" id="CHEBI:16240"/>
        <dbReference type="ChEBI" id="CHEBI:35235"/>
        <dbReference type="ChEBI" id="CHEBI:189549"/>
        <dbReference type="ChEBI" id="CHEBI:189554"/>
        <dbReference type="EC" id="1.8.3.5"/>
    </reaction>
    <physiologicalReaction direction="left-to-right" evidence="2">
        <dbReference type="Rhea" id="RHEA:70408"/>
    </physiologicalReaction>
</comment>
<comment type="cofactor">
    <cofactor evidence="2">
        <name>FAD</name>
        <dbReference type="ChEBI" id="CHEBI:57692"/>
    </cofactor>
</comment>
<comment type="subcellular location">
    <subcellularLocation>
        <location evidence="2">Lysosome</location>
    </subcellularLocation>
</comment>
<comment type="similarity">
    <text evidence="4">Belongs to the prenylcysteine oxidase family.</text>
</comment>
<sequence length="505" mass="56752">MGRVVAELVSSLLGLWLLLCSCGCPEGAELRAPPDKIAIIGAGIGGTSAAYYLRQKFGKDVKIDLFEREEVGGRLATMMVQGQEYEAGGSVIHPLNLRMKRFVKDLGLSTVQASGGLLGIYNGETLVFEESNWFIINVIKLVWRYGFQSLRMHMWVEDVLDKFMRIYRYQSHDYAFSSVEKLLHALGGDDFLGMLNRTLLETLQKAGFSEKFLNEMIAPVMRVNYGQSTDINAFVGAVSLSCSDSGLWAVEGGNKLVCSGLLQASKSNLISGSVMYIEEKTKTKHTGNPTKMYEVVYQIGTETRSDFYDIVLVATPLNRKMSNITFLNFDPPIEEFHQYYQHIVTTLVKGELNTSIFSSRPIDKFGLNTVLTTDNSDLFINSIGIVSSVREKEDPEPSTDGTYVWKIFSQETLTKAQILKLFLSYDYAVKKPWLAYPHYKPPEKCPSIILHDRLYYLNGIECAASAMEMSAIAAHNAALLAYHRWNRHTDMIDQDGLYEKLKTEL</sequence>
<organism>
    <name type="scientific">Pongo abelii</name>
    <name type="common">Sumatran orangutan</name>
    <name type="synonym">Pongo pygmaeus abelii</name>
    <dbReference type="NCBI Taxonomy" id="9601"/>
    <lineage>
        <taxon>Eukaryota</taxon>
        <taxon>Metazoa</taxon>
        <taxon>Chordata</taxon>
        <taxon>Craniata</taxon>
        <taxon>Vertebrata</taxon>
        <taxon>Euteleostomi</taxon>
        <taxon>Mammalia</taxon>
        <taxon>Eutheria</taxon>
        <taxon>Euarchontoglires</taxon>
        <taxon>Primates</taxon>
        <taxon>Haplorrhini</taxon>
        <taxon>Catarrhini</taxon>
        <taxon>Hominidae</taxon>
        <taxon>Pongo</taxon>
    </lineage>
</organism>
<reference key="1">
    <citation type="submission" date="2004-11" db="EMBL/GenBank/DDBJ databases">
        <authorList>
            <consortium name="The German cDNA consortium"/>
        </authorList>
    </citation>
    <scope>NUCLEOTIDE SEQUENCE [LARGE SCALE MRNA]</scope>
    <source>
        <tissue>Brain cortex</tissue>
    </source>
</reference>
<evidence type="ECO:0000250" key="1">
    <source>
        <dbReference type="UniProtKB" id="F1N2K1"/>
    </source>
</evidence>
<evidence type="ECO:0000250" key="2">
    <source>
        <dbReference type="UniProtKB" id="Q9UHG3"/>
    </source>
</evidence>
<evidence type="ECO:0000255" key="3"/>
<evidence type="ECO:0000305" key="4"/>
<feature type="signal peptide" evidence="3">
    <location>
        <begin position="1"/>
        <end position="27"/>
    </location>
</feature>
<feature type="chain" id="PRO_0000023301" description="Prenylcysteine oxidase 1">
    <location>
        <begin position="28"/>
        <end position="505"/>
    </location>
</feature>
<feature type="glycosylation site" description="N-linked (GlcNAc...) asparagine" evidence="3">
    <location>
        <position position="196"/>
    </location>
</feature>
<feature type="glycosylation site" description="N-linked (GlcNAc...) asparagine" evidence="3">
    <location>
        <position position="323"/>
    </location>
</feature>
<feature type="glycosylation site" description="N-linked (GlcNAc...) asparagine" evidence="3">
    <location>
        <position position="353"/>
    </location>
</feature>
<proteinExistence type="evidence at transcript level"/>
<keyword id="KW-0274">FAD</keyword>
<keyword id="KW-0285">Flavoprotein</keyword>
<keyword id="KW-0325">Glycoprotein</keyword>
<keyword id="KW-0458">Lysosome</keyword>
<keyword id="KW-0560">Oxidoreductase</keyword>
<keyword id="KW-1185">Reference proteome</keyword>
<keyword id="KW-0732">Signal</keyword>
<accession>Q5R748</accession>
<name>PCYOX_PONAB</name>
<gene>
    <name evidence="2" type="primary">PCYOX1</name>
</gene>
<dbReference type="EC" id="1.8.3.5" evidence="2"/>
<dbReference type="EMBL" id="CR860270">
    <property type="protein sequence ID" value="CAH92412.1"/>
    <property type="molecule type" value="mRNA"/>
</dbReference>
<dbReference type="RefSeq" id="NP_001126422.1">
    <property type="nucleotide sequence ID" value="NM_001132950.1"/>
</dbReference>
<dbReference type="SMR" id="Q5R748"/>
<dbReference type="FunCoup" id="Q5R748">
    <property type="interactions" value="815"/>
</dbReference>
<dbReference type="STRING" id="9601.ENSPPYP00000013746"/>
<dbReference type="GlyCosmos" id="Q5R748">
    <property type="glycosylation" value="3 sites, No reported glycans"/>
</dbReference>
<dbReference type="GeneID" id="100457284"/>
<dbReference type="KEGG" id="pon:100457284"/>
<dbReference type="CTD" id="51449"/>
<dbReference type="eggNOG" id="ENOG502QSHJ">
    <property type="taxonomic scope" value="Eukaryota"/>
</dbReference>
<dbReference type="InParanoid" id="Q5R748"/>
<dbReference type="OrthoDB" id="437369at2759"/>
<dbReference type="Proteomes" id="UP000001595">
    <property type="component" value="Unplaced"/>
</dbReference>
<dbReference type="GO" id="GO:0005764">
    <property type="term" value="C:lysosome"/>
    <property type="evidence" value="ECO:0007669"/>
    <property type="project" value="UniProtKB-SubCell"/>
</dbReference>
<dbReference type="GO" id="GO:0102149">
    <property type="term" value="F:farnesylcysteine lyase activity"/>
    <property type="evidence" value="ECO:0007669"/>
    <property type="project" value="RHEA"/>
</dbReference>
<dbReference type="GO" id="GO:0001735">
    <property type="term" value="F:prenylcysteine oxidase activity"/>
    <property type="evidence" value="ECO:0007669"/>
    <property type="project" value="UniProtKB-EC"/>
</dbReference>
<dbReference type="GO" id="GO:0030327">
    <property type="term" value="P:prenylated protein catabolic process"/>
    <property type="evidence" value="ECO:0007669"/>
    <property type="project" value="TreeGrafter"/>
</dbReference>
<dbReference type="GO" id="GO:0030328">
    <property type="term" value="P:prenylcysteine catabolic process"/>
    <property type="evidence" value="ECO:0007669"/>
    <property type="project" value="InterPro"/>
</dbReference>
<dbReference type="FunFam" id="3.50.50.60:FF:000081">
    <property type="entry name" value="prenylcysteine oxidase 1"/>
    <property type="match status" value="1"/>
</dbReference>
<dbReference type="Gene3D" id="3.50.50.60">
    <property type="entry name" value="FAD/NAD(P)-binding domain"/>
    <property type="match status" value="1"/>
</dbReference>
<dbReference type="InterPro" id="IPR036188">
    <property type="entry name" value="FAD/NAD-bd_sf"/>
</dbReference>
<dbReference type="InterPro" id="IPR010795">
    <property type="entry name" value="Prenylcys_lyase"/>
</dbReference>
<dbReference type="InterPro" id="IPR017046">
    <property type="entry name" value="Prenylcysteine_Oxase1"/>
</dbReference>
<dbReference type="PANTHER" id="PTHR15944">
    <property type="entry name" value="FARNESYLCYSTEINE LYASE"/>
    <property type="match status" value="1"/>
</dbReference>
<dbReference type="PANTHER" id="PTHR15944:SF3">
    <property type="entry name" value="PRENYLCYSTEINE OXIDASE 1"/>
    <property type="match status" value="1"/>
</dbReference>
<dbReference type="Pfam" id="PF13450">
    <property type="entry name" value="NAD_binding_8"/>
    <property type="match status" value="1"/>
</dbReference>
<dbReference type="Pfam" id="PF07156">
    <property type="entry name" value="Prenylcys_lyase"/>
    <property type="match status" value="1"/>
</dbReference>
<dbReference type="PIRSF" id="PIRSF036292">
    <property type="entry name" value="Prenylcysteine_oxidase"/>
    <property type="match status" value="1"/>
</dbReference>
<dbReference type="SUPFAM" id="SSF51905">
    <property type="entry name" value="FAD/NAD(P)-binding domain"/>
    <property type="match status" value="1"/>
</dbReference>